<dbReference type="EMBL" id="AB240139">
    <property type="protein sequence ID" value="BAE48024.1"/>
    <property type="molecule type" value="Genomic_DNA"/>
</dbReference>
<dbReference type="RefSeq" id="YP_398886.1">
    <property type="nucleotide sequence ID" value="NC_007602.1"/>
</dbReference>
<dbReference type="GeneID" id="3776298"/>
<dbReference type="KEGG" id="nto:3776298"/>
<dbReference type="OrthoDB" id="361870at2759"/>
<dbReference type="GO" id="GO:0009507">
    <property type="term" value="C:chloroplast"/>
    <property type="evidence" value="ECO:0007669"/>
    <property type="project" value="UniProtKB-SubCell"/>
</dbReference>
<dbReference type="GO" id="GO:1990904">
    <property type="term" value="C:ribonucleoprotein complex"/>
    <property type="evidence" value="ECO:0007669"/>
    <property type="project" value="UniProtKB-KW"/>
</dbReference>
<dbReference type="GO" id="GO:0005840">
    <property type="term" value="C:ribosome"/>
    <property type="evidence" value="ECO:0007669"/>
    <property type="project" value="UniProtKB-KW"/>
</dbReference>
<dbReference type="GO" id="GO:0003735">
    <property type="term" value="F:structural constituent of ribosome"/>
    <property type="evidence" value="ECO:0007669"/>
    <property type="project" value="InterPro"/>
</dbReference>
<dbReference type="GO" id="GO:0006412">
    <property type="term" value="P:translation"/>
    <property type="evidence" value="ECO:0007669"/>
    <property type="project" value="UniProtKB-UniRule"/>
</dbReference>
<dbReference type="Gene3D" id="2.20.28.120">
    <property type="entry name" value="Ribosomal protein L33"/>
    <property type="match status" value="1"/>
</dbReference>
<dbReference type="HAMAP" id="MF_00294">
    <property type="entry name" value="Ribosomal_bL33"/>
    <property type="match status" value="1"/>
</dbReference>
<dbReference type="InterPro" id="IPR001705">
    <property type="entry name" value="Ribosomal_bL33"/>
</dbReference>
<dbReference type="InterPro" id="IPR018264">
    <property type="entry name" value="Ribosomal_bL33_CS"/>
</dbReference>
<dbReference type="InterPro" id="IPR038584">
    <property type="entry name" value="Ribosomal_bL33_sf"/>
</dbReference>
<dbReference type="InterPro" id="IPR011332">
    <property type="entry name" value="Ribosomal_zn-bd"/>
</dbReference>
<dbReference type="NCBIfam" id="NF001764">
    <property type="entry name" value="PRK00504.1"/>
    <property type="match status" value="1"/>
</dbReference>
<dbReference type="NCBIfam" id="NF001860">
    <property type="entry name" value="PRK00595.1"/>
    <property type="match status" value="1"/>
</dbReference>
<dbReference type="NCBIfam" id="TIGR01023">
    <property type="entry name" value="rpmG_bact"/>
    <property type="match status" value="1"/>
</dbReference>
<dbReference type="PANTHER" id="PTHR43168">
    <property type="entry name" value="50S RIBOSOMAL PROTEIN L33, CHLOROPLASTIC"/>
    <property type="match status" value="1"/>
</dbReference>
<dbReference type="PANTHER" id="PTHR43168:SF2">
    <property type="entry name" value="LARGE RIBOSOMAL SUBUNIT PROTEIN BL33C"/>
    <property type="match status" value="1"/>
</dbReference>
<dbReference type="Pfam" id="PF00471">
    <property type="entry name" value="Ribosomal_L33"/>
    <property type="match status" value="1"/>
</dbReference>
<dbReference type="SUPFAM" id="SSF57829">
    <property type="entry name" value="Zn-binding ribosomal proteins"/>
    <property type="match status" value="1"/>
</dbReference>
<dbReference type="PROSITE" id="PS00582">
    <property type="entry name" value="RIBOSOMAL_L33"/>
    <property type="match status" value="1"/>
</dbReference>
<feature type="chain" id="PRO_0000276511" description="Large ribosomal subunit protein bL33c">
    <location>
        <begin position="1"/>
        <end position="66"/>
    </location>
</feature>
<reference key="1">
    <citation type="journal article" date="2006" name="Mol. Genet. Genomics">
        <title>The chloroplast genome of Nicotiana sylvestris and Nicotiana tomentosiformis: complete sequencing confirms that the Nicotiana sylvestris progenitor is the maternal genome donor of Nicotiana tabacum.</title>
        <authorList>
            <person name="Yukawa M."/>
            <person name="Tsudzuki T."/>
            <person name="Sugiura M."/>
        </authorList>
    </citation>
    <scope>NUCLEOTIDE SEQUENCE [LARGE SCALE GENOMIC DNA]</scope>
</reference>
<geneLocation type="chloroplast"/>
<accession>Q33C11</accession>
<organism>
    <name type="scientific">Nicotiana tomentosiformis</name>
    <name type="common">Tobacco</name>
    <dbReference type="NCBI Taxonomy" id="4098"/>
    <lineage>
        <taxon>Eukaryota</taxon>
        <taxon>Viridiplantae</taxon>
        <taxon>Streptophyta</taxon>
        <taxon>Embryophyta</taxon>
        <taxon>Tracheophyta</taxon>
        <taxon>Spermatophyta</taxon>
        <taxon>Magnoliopsida</taxon>
        <taxon>eudicotyledons</taxon>
        <taxon>Gunneridae</taxon>
        <taxon>Pentapetalae</taxon>
        <taxon>asterids</taxon>
        <taxon>lamiids</taxon>
        <taxon>Solanales</taxon>
        <taxon>Solanaceae</taxon>
        <taxon>Nicotianoideae</taxon>
        <taxon>Nicotianeae</taxon>
        <taxon>Nicotiana</taxon>
    </lineage>
</organism>
<sequence length="66" mass="7693">MAKGKDVRVTVILECTSCVRNSVDKVSRGISRYITQKNRHNTPNRLELKKFCPYCYKHTIHGEIKK</sequence>
<proteinExistence type="inferred from homology"/>
<comment type="subcellular location">
    <subcellularLocation>
        <location>Plastid</location>
        <location>Chloroplast</location>
    </subcellularLocation>
</comment>
<comment type="similarity">
    <text evidence="1">Belongs to the bacterial ribosomal protein bL33 family.</text>
</comment>
<keyword id="KW-0150">Chloroplast</keyword>
<keyword id="KW-0934">Plastid</keyword>
<keyword id="KW-0687">Ribonucleoprotein</keyword>
<keyword id="KW-0689">Ribosomal protein</keyword>
<evidence type="ECO:0000255" key="1">
    <source>
        <dbReference type="HAMAP-Rule" id="MF_00294"/>
    </source>
</evidence>
<evidence type="ECO:0000305" key="2"/>
<name>RK33_NICTO</name>
<protein>
    <recommendedName>
        <fullName evidence="1">Large ribosomal subunit protein bL33c</fullName>
    </recommendedName>
    <alternativeName>
        <fullName evidence="2">50S ribosomal protein L33, chloroplastic</fullName>
    </alternativeName>
</protein>
<gene>
    <name evidence="1" type="primary">rpl33</name>
</gene>